<sequence length="138" mass="15511">MQPDRNLLADLDHIFVDRSLGAVQVPQLLRDAGFRLTTMREHYGETQAQSVSDHKWIAMTAECGWIGFHKDANIRRNAVERRTVLDTGARLFCVPRADILAEQVAARYIASLAAIARAARFPGPFIYTVHPSKIVRVL</sequence>
<comment type="function">
    <text evidence="2">Toxic component of a type II toxin-antitoxin (TA) system. An RNase. The cognate antitoxin is VapB45.</text>
</comment>
<organism>
    <name type="scientific">Mycobacterium tuberculosis (strain ATCC 25618 / H37Rv)</name>
    <dbReference type="NCBI Taxonomy" id="83332"/>
    <lineage>
        <taxon>Bacteria</taxon>
        <taxon>Bacillati</taxon>
        <taxon>Actinomycetota</taxon>
        <taxon>Actinomycetes</taxon>
        <taxon>Mycobacteriales</taxon>
        <taxon>Mycobacteriaceae</taxon>
        <taxon>Mycobacterium</taxon>
        <taxon>Mycobacterium tuberculosis complex</taxon>
    </lineage>
</organism>
<accession>O53465</accession>
<accession>F2GG71</accession>
<accession>I6XD43</accession>
<accession>Q7D7M3</accession>
<keyword id="KW-0378">Hydrolase</keyword>
<keyword id="KW-0540">Nuclease</keyword>
<keyword id="KW-1185">Reference proteome</keyword>
<keyword id="KW-1277">Toxin-antitoxin system</keyword>
<gene>
    <name evidence="1" type="primary">vapC45</name>
    <name type="ordered locus">Rv2019</name>
    <name type="ordered locus">RVBD_2019</name>
    <name type="ORF">P425_02090</name>
</gene>
<protein>
    <recommendedName>
        <fullName evidence="1">Putative ribonuclease VapC45</fullName>
        <shortName>RNase VapC45</shortName>
        <ecNumber>3.1.-.-</ecNumber>
    </recommendedName>
    <alternativeName>
        <fullName evidence="1">Toxin VapC45</fullName>
    </alternativeName>
</protein>
<reference key="1">
    <citation type="journal article" date="1998" name="Nature">
        <title>Deciphering the biology of Mycobacterium tuberculosis from the complete genome sequence.</title>
        <authorList>
            <person name="Cole S.T."/>
            <person name="Brosch R."/>
            <person name="Parkhill J."/>
            <person name="Garnier T."/>
            <person name="Churcher C.M."/>
            <person name="Harris D.E."/>
            <person name="Gordon S.V."/>
            <person name="Eiglmeier K."/>
            <person name="Gas S."/>
            <person name="Barry C.E. III"/>
            <person name="Tekaia F."/>
            <person name="Badcock K."/>
            <person name="Basham D."/>
            <person name="Brown D."/>
            <person name="Chillingworth T."/>
            <person name="Connor R."/>
            <person name="Davies R.M."/>
            <person name="Devlin K."/>
            <person name="Feltwell T."/>
            <person name="Gentles S."/>
            <person name="Hamlin N."/>
            <person name="Holroyd S."/>
            <person name="Hornsby T."/>
            <person name="Jagels K."/>
            <person name="Krogh A."/>
            <person name="McLean J."/>
            <person name="Moule S."/>
            <person name="Murphy L.D."/>
            <person name="Oliver S."/>
            <person name="Osborne J."/>
            <person name="Quail M.A."/>
            <person name="Rajandream M.A."/>
            <person name="Rogers J."/>
            <person name="Rutter S."/>
            <person name="Seeger K."/>
            <person name="Skelton S."/>
            <person name="Squares S."/>
            <person name="Squares R."/>
            <person name="Sulston J.E."/>
            <person name="Taylor K."/>
            <person name="Whitehead S."/>
            <person name="Barrell B.G."/>
        </authorList>
    </citation>
    <scope>NUCLEOTIDE SEQUENCE [LARGE SCALE GENOMIC DNA]</scope>
    <source>
        <strain>ATCC 25618 / H37Rv</strain>
    </source>
</reference>
<reference key="2">
    <citation type="submission" date="2013-11" db="EMBL/GenBank/DDBJ databases">
        <title>The genome sequence of Mycobacterium tuberculosis H37Rv.</title>
        <authorList>
            <consortium name="The Broad Institute Genome Sequencing Platform"/>
            <person name="Galagan J."/>
            <person name="Kreiswirth B."/>
            <person name="Dobos K."/>
            <person name="Fortune S."/>
            <person name="Fitzgerald M."/>
            <person name="Young S.K."/>
            <person name="Zeng Q."/>
            <person name="Gargeya S."/>
            <person name="Abouelleil A."/>
            <person name="Alvarado L."/>
            <person name="Berlin A.M."/>
            <person name="Chapman S.B."/>
            <person name="Gainer-Dewar J."/>
            <person name="Goldberg J."/>
            <person name="Gnerre S."/>
            <person name="Griggs A."/>
            <person name="Gujja S."/>
            <person name="Hansen M."/>
            <person name="Howarth C."/>
            <person name="Imamovic A."/>
            <person name="Larimer J."/>
            <person name="McCowan C."/>
            <person name="Murphy C."/>
            <person name="Pearson M."/>
            <person name="Poon T."/>
            <person name="Priest M."/>
            <person name="Roberts A."/>
            <person name="Saif S."/>
            <person name="Shea T."/>
            <person name="Sykes S."/>
            <person name="Wortman J."/>
            <person name="Nusbaum C."/>
            <person name="Birren B."/>
        </authorList>
    </citation>
    <scope>NUCLEOTIDE SEQUENCE [LARGE SCALE GENOMIC DNA]</scope>
    <source>
        <strain>ATCC 25618 / H37Rv</strain>
    </source>
</reference>
<reference key="3">
    <citation type="submission" date="2014-04" db="EMBL/GenBank/DDBJ databases">
        <title>The Ggnome sequence of Mycobacterium tuberculosis H37Rv.</title>
        <authorList>
            <consortium name="The Broad Institute Genomics Platform"/>
            <consortium name="The Broad Institute Genome Sequencing Center for Infectious Disease"/>
            <person name="Earl A.M."/>
            <person name="Kreiswirth B."/>
            <person name="Gomez J."/>
            <person name="Victor T."/>
            <person name="Desjardins C."/>
            <person name="Abeel T."/>
            <person name="Young S."/>
            <person name="Zeng Q."/>
            <person name="Gargeya S."/>
            <person name="Abouelleil A."/>
            <person name="Alvarado L."/>
            <person name="Chapman S.B."/>
            <person name="Gainer-Dewar J."/>
            <person name="Goldberg J."/>
            <person name="Griggs A."/>
            <person name="Gujja S."/>
            <person name="Hansen M."/>
            <person name="Howarth C."/>
            <person name="Imamovic A."/>
            <person name="Larimer J."/>
            <person name="Murphy C."/>
            <person name="Naylor J."/>
            <person name="Pearson M."/>
            <person name="Poon T.W."/>
            <person name="Priest M."/>
            <person name="Roberts A."/>
            <person name="Saif S."/>
            <person name="Shea T."/>
            <person name="Sykes S."/>
            <person name="Wortman J."/>
            <person name="Nusbaum C."/>
            <person name="Birren B."/>
        </authorList>
    </citation>
    <scope>NUCLEOTIDE SEQUENCE [LARGE SCALE GENOMIC DNA]</scope>
    <source>
        <strain>ATCC 25618 / H37Rv</strain>
    </source>
</reference>
<reference key="4">
    <citation type="journal article" date="2011" name="Mol. Cell. Proteomics">
        <title>Proteogenomic analysis of Mycobacterium tuberculosis by high resolution mass spectrometry.</title>
        <authorList>
            <person name="Kelkar D.S."/>
            <person name="Kumar D."/>
            <person name="Kumar P."/>
            <person name="Balakrishnan L."/>
            <person name="Muthusamy B."/>
            <person name="Yadav A.K."/>
            <person name="Shrivastava P."/>
            <person name="Marimuthu A."/>
            <person name="Anand S."/>
            <person name="Sundaram H."/>
            <person name="Kingsbury R."/>
            <person name="Harsha H.C."/>
            <person name="Nair B."/>
            <person name="Prasad T.S."/>
            <person name="Chauhan D.S."/>
            <person name="Katoch K."/>
            <person name="Katoch V.M."/>
            <person name="Kumar P."/>
            <person name="Chaerkady R."/>
            <person name="Ramachandran S."/>
            <person name="Dash D."/>
            <person name="Pandey A."/>
        </authorList>
    </citation>
    <scope>IDENTIFICATION BY MASS SPECTROMETRY [LARGE SCALE ANALYSIS]</scope>
    <source>
        <strain>ATCC 25618 / H37Rv</strain>
    </source>
</reference>
<reference key="5">
    <citation type="journal article" date="2014" name="Toxins">
        <title>Multiple toxin-antitoxin systems in Mycobacterium tuberculosis.</title>
        <authorList>
            <person name="Sala A."/>
            <person name="Bordes P."/>
            <person name="Genevaux P."/>
        </authorList>
    </citation>
    <scope>GENE NAME</scope>
    <scope>DISCUSSION OF FUNCTION</scope>
    <scope>REVIEW</scope>
    <source>
        <strain>ATCC 25618 / H37Rv</strain>
    </source>
</reference>
<proteinExistence type="evidence at protein level"/>
<feature type="chain" id="PRO_0000433056" description="Putative ribonuclease VapC45">
    <location>
        <begin position="1"/>
        <end position="138"/>
    </location>
</feature>
<evidence type="ECO:0000303" key="1">
    <source>
    </source>
</evidence>
<evidence type="ECO:0000305" key="2">
    <source>
    </source>
</evidence>
<name>VPC45_MYCTU</name>
<dbReference type="EC" id="3.1.-.-"/>
<dbReference type="EMBL" id="AL123456">
    <property type="protein sequence ID" value="CCP44791.1"/>
    <property type="molecule type" value="Genomic_DNA"/>
</dbReference>
<dbReference type="EMBL" id="CP003248">
    <property type="protein sequence ID" value="AFN49959.1"/>
    <property type="molecule type" value="Genomic_DNA"/>
</dbReference>
<dbReference type="EMBL" id="JLDD01000023">
    <property type="protein sequence ID" value="KBJ33163.1"/>
    <property type="molecule type" value="Genomic_DNA"/>
</dbReference>
<dbReference type="RefSeq" id="NP_216535.1">
    <property type="nucleotide sequence ID" value="NC_000962.3"/>
</dbReference>
<dbReference type="RefSeq" id="WP_003410114.1">
    <property type="nucleotide sequence ID" value="NZ_NVQJ01000046.1"/>
</dbReference>
<dbReference type="SMR" id="O53465"/>
<dbReference type="STRING" id="83332.Rv2019"/>
<dbReference type="PaxDb" id="83332-Rv2019"/>
<dbReference type="GeneID" id="887665"/>
<dbReference type="KEGG" id="mtu:Rv2019"/>
<dbReference type="KEGG" id="mtv:RVBD_2019"/>
<dbReference type="PATRIC" id="fig|83332.111.peg.2250"/>
<dbReference type="TubercuList" id="Rv2019"/>
<dbReference type="eggNOG" id="ENOG5032SH5">
    <property type="taxonomic scope" value="Bacteria"/>
</dbReference>
<dbReference type="HOGENOM" id="CLU_152501_0_0_11"/>
<dbReference type="InParanoid" id="O53465"/>
<dbReference type="OrthoDB" id="5116334at2"/>
<dbReference type="Proteomes" id="UP000001584">
    <property type="component" value="Chromosome"/>
</dbReference>
<dbReference type="GO" id="GO:0004518">
    <property type="term" value="F:nuclease activity"/>
    <property type="evidence" value="ECO:0007669"/>
    <property type="project" value="UniProtKB-KW"/>
</dbReference>
<dbReference type="InterPro" id="IPR041375">
    <property type="entry name" value="VapC45_PIN-like"/>
</dbReference>
<dbReference type="Pfam" id="PF18478">
    <property type="entry name" value="PIN_10"/>
    <property type="match status" value="1"/>
</dbReference>